<protein>
    <recommendedName>
        <fullName>DEAD-box ATP-dependent RNA helicase 27</fullName>
        <ecNumber>3.6.4.13</ecNumber>
    </recommendedName>
</protein>
<accession>Q84T03</accession>
<accession>A0A0P0W4K7</accession>
<reference key="1">
    <citation type="journal article" date="2005" name="Genome Res.">
        <title>Sequence, annotation, and analysis of synteny between rice chromosome 3 and diverged grass species.</title>
        <authorList>
            <consortium name="The rice chromosome 3 sequencing consortium"/>
            <person name="Buell C.R."/>
            <person name="Yuan Q."/>
            <person name="Ouyang S."/>
            <person name="Liu J."/>
            <person name="Zhu W."/>
            <person name="Wang A."/>
            <person name="Maiti R."/>
            <person name="Haas B."/>
            <person name="Wortman J."/>
            <person name="Pertea M."/>
            <person name="Jones K.M."/>
            <person name="Kim M."/>
            <person name="Overton L."/>
            <person name="Tsitrin T."/>
            <person name="Fadrosh D."/>
            <person name="Bera J."/>
            <person name="Weaver B."/>
            <person name="Jin S."/>
            <person name="Johri S."/>
            <person name="Reardon M."/>
            <person name="Webb K."/>
            <person name="Hill J."/>
            <person name="Moffat K."/>
            <person name="Tallon L."/>
            <person name="Van Aken S."/>
            <person name="Lewis M."/>
            <person name="Utterback T."/>
            <person name="Feldblyum T."/>
            <person name="Zismann V."/>
            <person name="Iobst S."/>
            <person name="Hsiao J."/>
            <person name="de Vazeille A.R."/>
            <person name="Salzberg S.L."/>
            <person name="White O."/>
            <person name="Fraser C.M."/>
            <person name="Yu Y."/>
            <person name="Kim H."/>
            <person name="Rambo T."/>
            <person name="Currie J."/>
            <person name="Collura K."/>
            <person name="Kernodle-Thompson S."/>
            <person name="Wei F."/>
            <person name="Kudrna K."/>
            <person name="Ammiraju J.S.S."/>
            <person name="Luo M."/>
            <person name="Goicoechea J.L."/>
            <person name="Wing R.A."/>
            <person name="Henry D."/>
            <person name="Oates R."/>
            <person name="Palmer M."/>
            <person name="Pries G."/>
            <person name="Saski C."/>
            <person name="Simmons J."/>
            <person name="Soderlund C."/>
            <person name="Nelson W."/>
            <person name="de la Bastide M."/>
            <person name="Spiegel L."/>
            <person name="Nascimento L."/>
            <person name="Huang E."/>
            <person name="Preston R."/>
            <person name="Zutavern T."/>
            <person name="Palmer L."/>
            <person name="O'Shaughnessy A."/>
            <person name="Dike S."/>
            <person name="McCombie W.R."/>
            <person name="Minx P."/>
            <person name="Cordum H."/>
            <person name="Wilson R."/>
            <person name="Jin W."/>
            <person name="Lee H.R."/>
            <person name="Jiang J."/>
            <person name="Jackson S."/>
        </authorList>
    </citation>
    <scope>NUCLEOTIDE SEQUENCE [LARGE SCALE GENOMIC DNA]</scope>
    <source>
        <strain>cv. Nipponbare</strain>
    </source>
</reference>
<reference key="2">
    <citation type="journal article" date="2005" name="Nature">
        <title>The map-based sequence of the rice genome.</title>
        <authorList>
            <consortium name="International rice genome sequencing project (IRGSP)"/>
        </authorList>
    </citation>
    <scope>NUCLEOTIDE SEQUENCE [LARGE SCALE GENOMIC DNA]</scope>
    <source>
        <strain>cv. Nipponbare</strain>
    </source>
</reference>
<reference key="3">
    <citation type="journal article" date="2008" name="Nucleic Acids Res.">
        <title>The rice annotation project database (RAP-DB): 2008 update.</title>
        <authorList>
            <consortium name="The rice annotation project (RAP)"/>
        </authorList>
    </citation>
    <scope>GENOME REANNOTATION</scope>
    <source>
        <strain>cv. Nipponbare</strain>
    </source>
</reference>
<reference key="4">
    <citation type="journal article" date="2013" name="Rice">
        <title>Improvement of the Oryza sativa Nipponbare reference genome using next generation sequence and optical map data.</title>
        <authorList>
            <person name="Kawahara Y."/>
            <person name="de la Bastide M."/>
            <person name="Hamilton J.P."/>
            <person name="Kanamori H."/>
            <person name="McCombie W.R."/>
            <person name="Ouyang S."/>
            <person name="Schwartz D.C."/>
            <person name="Tanaka T."/>
            <person name="Wu J."/>
            <person name="Zhou S."/>
            <person name="Childs K.L."/>
            <person name="Davidson R.M."/>
            <person name="Lin H."/>
            <person name="Quesada-Ocampo L."/>
            <person name="Vaillancourt B."/>
            <person name="Sakai H."/>
            <person name="Lee S.S."/>
            <person name="Kim J."/>
            <person name="Numa H."/>
            <person name="Itoh T."/>
            <person name="Buell C.R."/>
            <person name="Matsumoto T."/>
        </authorList>
    </citation>
    <scope>GENOME REANNOTATION</scope>
    <source>
        <strain>cv. Nipponbare</strain>
    </source>
</reference>
<reference key="5">
    <citation type="journal article" date="2005" name="PLoS Biol.">
        <title>The genomes of Oryza sativa: a history of duplications.</title>
        <authorList>
            <person name="Yu J."/>
            <person name="Wang J."/>
            <person name="Lin W."/>
            <person name="Li S."/>
            <person name="Li H."/>
            <person name="Zhou J."/>
            <person name="Ni P."/>
            <person name="Dong W."/>
            <person name="Hu S."/>
            <person name="Zeng C."/>
            <person name="Zhang J."/>
            <person name="Zhang Y."/>
            <person name="Li R."/>
            <person name="Xu Z."/>
            <person name="Li S."/>
            <person name="Li X."/>
            <person name="Zheng H."/>
            <person name="Cong L."/>
            <person name="Lin L."/>
            <person name="Yin J."/>
            <person name="Geng J."/>
            <person name="Li G."/>
            <person name="Shi J."/>
            <person name="Liu J."/>
            <person name="Lv H."/>
            <person name="Li J."/>
            <person name="Wang J."/>
            <person name="Deng Y."/>
            <person name="Ran L."/>
            <person name="Shi X."/>
            <person name="Wang X."/>
            <person name="Wu Q."/>
            <person name="Li C."/>
            <person name="Ren X."/>
            <person name="Wang J."/>
            <person name="Wang X."/>
            <person name="Li D."/>
            <person name="Liu D."/>
            <person name="Zhang X."/>
            <person name="Ji Z."/>
            <person name="Zhao W."/>
            <person name="Sun Y."/>
            <person name="Zhang Z."/>
            <person name="Bao J."/>
            <person name="Han Y."/>
            <person name="Dong L."/>
            <person name="Ji J."/>
            <person name="Chen P."/>
            <person name="Wu S."/>
            <person name="Liu J."/>
            <person name="Xiao Y."/>
            <person name="Bu D."/>
            <person name="Tan J."/>
            <person name="Yang L."/>
            <person name="Ye C."/>
            <person name="Zhang J."/>
            <person name="Xu J."/>
            <person name="Zhou Y."/>
            <person name="Yu Y."/>
            <person name="Zhang B."/>
            <person name="Zhuang S."/>
            <person name="Wei H."/>
            <person name="Liu B."/>
            <person name="Lei M."/>
            <person name="Yu H."/>
            <person name="Li Y."/>
            <person name="Xu H."/>
            <person name="Wei S."/>
            <person name="He X."/>
            <person name="Fang L."/>
            <person name="Zhang Z."/>
            <person name="Zhang Y."/>
            <person name="Huang X."/>
            <person name="Su Z."/>
            <person name="Tong W."/>
            <person name="Li J."/>
            <person name="Tong Z."/>
            <person name="Li S."/>
            <person name="Ye J."/>
            <person name="Wang L."/>
            <person name="Fang L."/>
            <person name="Lei T."/>
            <person name="Chen C.-S."/>
            <person name="Chen H.-C."/>
            <person name="Xu Z."/>
            <person name="Li H."/>
            <person name="Huang H."/>
            <person name="Zhang F."/>
            <person name="Xu H."/>
            <person name="Li N."/>
            <person name="Zhao C."/>
            <person name="Li S."/>
            <person name="Dong L."/>
            <person name="Huang Y."/>
            <person name="Li L."/>
            <person name="Xi Y."/>
            <person name="Qi Q."/>
            <person name="Li W."/>
            <person name="Zhang B."/>
            <person name="Hu W."/>
            <person name="Zhang Y."/>
            <person name="Tian X."/>
            <person name="Jiao Y."/>
            <person name="Liang X."/>
            <person name="Jin J."/>
            <person name="Gao L."/>
            <person name="Zheng W."/>
            <person name="Hao B."/>
            <person name="Liu S.-M."/>
            <person name="Wang W."/>
            <person name="Yuan L."/>
            <person name="Cao M."/>
            <person name="McDermott J."/>
            <person name="Samudrala R."/>
            <person name="Wang J."/>
            <person name="Wong G.K.-S."/>
            <person name="Yang H."/>
        </authorList>
    </citation>
    <scope>NUCLEOTIDE SEQUENCE [LARGE SCALE GENOMIC DNA]</scope>
    <source>
        <strain>cv. Nipponbare</strain>
    </source>
</reference>
<proteinExistence type="inferred from homology"/>
<comment type="catalytic activity">
    <reaction>
        <text>ATP + H2O = ADP + phosphate + H(+)</text>
        <dbReference type="Rhea" id="RHEA:13065"/>
        <dbReference type="ChEBI" id="CHEBI:15377"/>
        <dbReference type="ChEBI" id="CHEBI:15378"/>
        <dbReference type="ChEBI" id="CHEBI:30616"/>
        <dbReference type="ChEBI" id="CHEBI:43474"/>
        <dbReference type="ChEBI" id="CHEBI:456216"/>
        <dbReference type="EC" id="3.6.4.13"/>
    </reaction>
</comment>
<comment type="domain">
    <text>The Q motif is unique to and characteristic of the DEAD box family of RNA helicases and controls ATP binding and hydrolysis.</text>
</comment>
<comment type="similarity">
    <text evidence="5">Belongs to the DEAD box helicase family. DDX18/HAS1 subfamily.</text>
</comment>
<comment type="sequence caution" evidence="5">
    <conflict type="erroneous gene model prediction">
        <sequence resource="EMBL-CDS" id="BAF13517"/>
    </conflict>
</comment>
<keyword id="KW-0067">ATP-binding</keyword>
<keyword id="KW-0175">Coiled coil</keyword>
<keyword id="KW-0347">Helicase</keyword>
<keyword id="KW-0378">Hydrolase</keyword>
<keyword id="KW-0547">Nucleotide-binding</keyword>
<keyword id="KW-1185">Reference proteome</keyword>
<keyword id="KW-0694">RNA-binding</keyword>
<sequence length="590" mass="66651">MAPAPATTSSSKRSKKRKQPVAPPPESDSESEELSYDTAAADEEEGEEEAPNQMEELEEEQEEEKKEKKQKKEMSKEKKRKKEKGNEGGSGILTNMLFSELGVSEPTARAIREMNYTYLTQIQARSIPHLLNGKDVMGAAKTGSGKTLAFLIPAIEMLHHAHFMPRNGTGVVVVCPTRELAIQTHNVAKELMKYHSQTLGYIIGGNGRRGEADQLAKGVNLLVATPGRLLDHLQNTKGFIYRRLKCLIIDEADRLLEQNFEEDMKQIFKRLPLNRQTVLFSATQTEQVKEFAKLSFEKNEESTSKPVYVGVDDAETNATVEGLQQGYCVIDSARRFLVLYAFLKKKQNKKVMVFFSSCNSVKFHAELLNFLQIECSDIHGKQKQQKRTTTFFNFCKAEKGILLCTNVAARGLDIPDVDFIVQYDPPDEPKDYIHRVGRTARGEKGKGEALLFLLPQELKFLIYLKAAKISLTELVFNENKVPNLQSHLENIVGENYFLNQSAKEAYRSYILAYDSHSMKDIFDVHNLNLKDVAASFCFKNPPKVNIDLESSASKHRRKMRKVDGGRRHGISAANPYGRKGGDDKRQFARF</sequence>
<evidence type="ECO:0000255" key="1"/>
<evidence type="ECO:0000255" key="2">
    <source>
        <dbReference type="PROSITE-ProRule" id="PRU00541"/>
    </source>
</evidence>
<evidence type="ECO:0000255" key="3">
    <source>
        <dbReference type="PROSITE-ProRule" id="PRU00542"/>
    </source>
</evidence>
<evidence type="ECO:0000256" key="4">
    <source>
        <dbReference type="SAM" id="MobiDB-lite"/>
    </source>
</evidence>
<evidence type="ECO:0000305" key="5"/>
<gene>
    <name type="ordered locus">Os03g0802700</name>
    <name type="ordered locus">LOC_Os03g58810</name>
    <name type="ORF">OsJ_12997</name>
    <name type="ORF">OSJNBa0087C10.12</name>
</gene>
<dbReference type="EC" id="3.6.4.13"/>
<dbReference type="EMBL" id="AC108906">
    <property type="protein sequence ID" value="AAO72375.1"/>
    <property type="molecule type" value="Genomic_DNA"/>
</dbReference>
<dbReference type="EMBL" id="DP000009">
    <property type="protein sequence ID" value="ABF99405.1"/>
    <property type="molecule type" value="Genomic_DNA"/>
</dbReference>
<dbReference type="EMBL" id="AP008209">
    <property type="protein sequence ID" value="BAF13517.2"/>
    <property type="status" value="ALT_SEQ"/>
    <property type="molecule type" value="Genomic_DNA"/>
</dbReference>
<dbReference type="EMBL" id="AP014959">
    <property type="protein sequence ID" value="BAS86908.1"/>
    <property type="molecule type" value="Genomic_DNA"/>
</dbReference>
<dbReference type="EMBL" id="CM000140">
    <property type="protein sequence ID" value="EAZ28951.1"/>
    <property type="molecule type" value="Genomic_DNA"/>
</dbReference>
<dbReference type="RefSeq" id="XP_015631966.1">
    <property type="nucleotide sequence ID" value="XM_015776480.1"/>
</dbReference>
<dbReference type="SMR" id="Q84T03"/>
<dbReference type="FunCoup" id="Q84T03">
    <property type="interactions" value="1906"/>
</dbReference>
<dbReference type="STRING" id="39947.Q84T03"/>
<dbReference type="iPTMnet" id="Q84T03"/>
<dbReference type="PaxDb" id="39947-Q84T03"/>
<dbReference type="EnsemblPlants" id="Os03t0802700-01">
    <property type="protein sequence ID" value="Os03t0802700-01"/>
    <property type="gene ID" value="Os03g0802700"/>
</dbReference>
<dbReference type="Gramene" id="Os03t0802700-01">
    <property type="protein sequence ID" value="Os03t0802700-01"/>
    <property type="gene ID" value="Os03g0802700"/>
</dbReference>
<dbReference type="KEGG" id="dosa:Os03g0802700"/>
<dbReference type="eggNOG" id="KOG0342">
    <property type="taxonomic scope" value="Eukaryota"/>
</dbReference>
<dbReference type="HOGENOM" id="CLU_003041_26_5_1"/>
<dbReference type="InParanoid" id="Q84T03"/>
<dbReference type="OMA" id="LMEFHSQ"/>
<dbReference type="OrthoDB" id="10259640at2759"/>
<dbReference type="Proteomes" id="UP000000763">
    <property type="component" value="Chromosome 3"/>
</dbReference>
<dbReference type="Proteomes" id="UP000007752">
    <property type="component" value="Chromosome 3"/>
</dbReference>
<dbReference type="Proteomes" id="UP000059680">
    <property type="component" value="Chromosome 3"/>
</dbReference>
<dbReference type="GO" id="GO:0005730">
    <property type="term" value="C:nucleolus"/>
    <property type="evidence" value="ECO:0000318"/>
    <property type="project" value="GO_Central"/>
</dbReference>
<dbReference type="GO" id="GO:0005524">
    <property type="term" value="F:ATP binding"/>
    <property type="evidence" value="ECO:0007669"/>
    <property type="project" value="UniProtKB-KW"/>
</dbReference>
<dbReference type="GO" id="GO:0016887">
    <property type="term" value="F:ATP hydrolysis activity"/>
    <property type="evidence" value="ECO:0007669"/>
    <property type="project" value="RHEA"/>
</dbReference>
<dbReference type="GO" id="GO:0003723">
    <property type="term" value="F:RNA binding"/>
    <property type="evidence" value="ECO:0007669"/>
    <property type="project" value="UniProtKB-KW"/>
</dbReference>
<dbReference type="GO" id="GO:0003724">
    <property type="term" value="F:RNA helicase activity"/>
    <property type="evidence" value="ECO:0007669"/>
    <property type="project" value="UniProtKB-EC"/>
</dbReference>
<dbReference type="GO" id="GO:0000463">
    <property type="term" value="P:maturation of LSU-rRNA from tricistronic rRNA transcript (SSU-rRNA, 5.8S rRNA, LSU-rRNA)"/>
    <property type="evidence" value="ECO:0000318"/>
    <property type="project" value="GO_Central"/>
</dbReference>
<dbReference type="CDD" id="cd17942">
    <property type="entry name" value="DEADc_DDX18"/>
    <property type="match status" value="1"/>
</dbReference>
<dbReference type="CDD" id="cd18787">
    <property type="entry name" value="SF2_C_DEAD"/>
    <property type="match status" value="1"/>
</dbReference>
<dbReference type="FunFam" id="3.40.50.300:FF:000379">
    <property type="entry name" value="RNA helicase"/>
    <property type="match status" value="1"/>
</dbReference>
<dbReference type="Gene3D" id="3.40.50.300">
    <property type="entry name" value="P-loop containing nucleotide triphosphate hydrolases"/>
    <property type="match status" value="2"/>
</dbReference>
<dbReference type="InterPro" id="IPR044773">
    <property type="entry name" value="DDX18/Has1_DEADc"/>
</dbReference>
<dbReference type="InterPro" id="IPR011545">
    <property type="entry name" value="DEAD/DEAH_box_helicase_dom"/>
</dbReference>
<dbReference type="InterPro" id="IPR014001">
    <property type="entry name" value="Helicase_ATP-bd"/>
</dbReference>
<dbReference type="InterPro" id="IPR001650">
    <property type="entry name" value="Helicase_C-like"/>
</dbReference>
<dbReference type="InterPro" id="IPR027417">
    <property type="entry name" value="P-loop_NTPase"/>
</dbReference>
<dbReference type="InterPro" id="IPR000629">
    <property type="entry name" value="RNA-helicase_DEAD-box_CS"/>
</dbReference>
<dbReference type="InterPro" id="IPR014014">
    <property type="entry name" value="RNA_helicase_DEAD_Q_motif"/>
</dbReference>
<dbReference type="InterPro" id="IPR025313">
    <property type="entry name" value="SPB4-like_CTE"/>
</dbReference>
<dbReference type="PANTHER" id="PTHR24031">
    <property type="entry name" value="RNA HELICASE"/>
    <property type="match status" value="1"/>
</dbReference>
<dbReference type="Pfam" id="PF13959">
    <property type="entry name" value="CTE_SPB4"/>
    <property type="match status" value="1"/>
</dbReference>
<dbReference type="Pfam" id="PF00270">
    <property type="entry name" value="DEAD"/>
    <property type="match status" value="1"/>
</dbReference>
<dbReference type="Pfam" id="PF00271">
    <property type="entry name" value="Helicase_C"/>
    <property type="match status" value="1"/>
</dbReference>
<dbReference type="SMART" id="SM00487">
    <property type="entry name" value="DEXDc"/>
    <property type="match status" value="1"/>
</dbReference>
<dbReference type="SMART" id="SM01178">
    <property type="entry name" value="DUF4217"/>
    <property type="match status" value="1"/>
</dbReference>
<dbReference type="SMART" id="SM00490">
    <property type="entry name" value="HELICc"/>
    <property type="match status" value="1"/>
</dbReference>
<dbReference type="SUPFAM" id="SSF52540">
    <property type="entry name" value="P-loop containing nucleoside triphosphate hydrolases"/>
    <property type="match status" value="1"/>
</dbReference>
<dbReference type="PROSITE" id="PS00039">
    <property type="entry name" value="DEAD_ATP_HELICASE"/>
    <property type="match status" value="1"/>
</dbReference>
<dbReference type="PROSITE" id="PS51192">
    <property type="entry name" value="HELICASE_ATP_BIND_1"/>
    <property type="match status" value="1"/>
</dbReference>
<dbReference type="PROSITE" id="PS51194">
    <property type="entry name" value="HELICASE_CTER"/>
    <property type="match status" value="1"/>
</dbReference>
<dbReference type="PROSITE" id="PS51195">
    <property type="entry name" value="Q_MOTIF"/>
    <property type="match status" value="1"/>
</dbReference>
<feature type="chain" id="PRO_0000282466" description="DEAD-box ATP-dependent RNA helicase 27">
    <location>
        <begin position="1"/>
        <end position="590"/>
    </location>
</feature>
<feature type="domain" description="Helicase ATP-binding" evidence="2">
    <location>
        <begin position="127"/>
        <end position="302"/>
    </location>
</feature>
<feature type="domain" description="Helicase C-terminal" evidence="3">
    <location>
        <begin position="335"/>
        <end position="488"/>
    </location>
</feature>
<feature type="region of interest" description="Disordered" evidence="4">
    <location>
        <begin position="1"/>
        <end position="92"/>
    </location>
</feature>
<feature type="region of interest" description="Disordered" evidence="4">
    <location>
        <begin position="551"/>
        <end position="590"/>
    </location>
</feature>
<feature type="coiled-coil region" evidence="1">
    <location>
        <begin position="40"/>
        <end position="87"/>
    </location>
</feature>
<feature type="short sequence motif" description="Q motif">
    <location>
        <begin position="96"/>
        <end position="124"/>
    </location>
</feature>
<feature type="short sequence motif" description="DEAD box">
    <location>
        <begin position="250"/>
        <end position="253"/>
    </location>
</feature>
<feature type="compositionally biased region" description="Acidic residues" evidence="4">
    <location>
        <begin position="27"/>
        <end position="62"/>
    </location>
</feature>
<feature type="compositionally biased region" description="Basic and acidic residues" evidence="4">
    <location>
        <begin position="63"/>
        <end position="76"/>
    </location>
</feature>
<feature type="compositionally biased region" description="Basic and acidic residues" evidence="4">
    <location>
        <begin position="579"/>
        <end position="590"/>
    </location>
</feature>
<feature type="binding site" evidence="2">
    <location>
        <begin position="140"/>
        <end position="147"/>
    </location>
    <ligand>
        <name>ATP</name>
        <dbReference type="ChEBI" id="CHEBI:30616"/>
    </ligand>
</feature>
<organism>
    <name type="scientific">Oryza sativa subsp. japonica</name>
    <name type="common">Rice</name>
    <dbReference type="NCBI Taxonomy" id="39947"/>
    <lineage>
        <taxon>Eukaryota</taxon>
        <taxon>Viridiplantae</taxon>
        <taxon>Streptophyta</taxon>
        <taxon>Embryophyta</taxon>
        <taxon>Tracheophyta</taxon>
        <taxon>Spermatophyta</taxon>
        <taxon>Magnoliopsida</taxon>
        <taxon>Liliopsida</taxon>
        <taxon>Poales</taxon>
        <taxon>Poaceae</taxon>
        <taxon>BOP clade</taxon>
        <taxon>Oryzoideae</taxon>
        <taxon>Oryzeae</taxon>
        <taxon>Oryzinae</taxon>
        <taxon>Oryza</taxon>
        <taxon>Oryza sativa</taxon>
    </lineage>
</organism>
<name>RH27_ORYSJ</name>